<organism>
    <name type="scientific">Naja naja</name>
    <name type="common">Indian cobra</name>
    <dbReference type="NCBI Taxonomy" id="35670"/>
    <lineage>
        <taxon>Eukaryota</taxon>
        <taxon>Metazoa</taxon>
        <taxon>Chordata</taxon>
        <taxon>Craniata</taxon>
        <taxon>Vertebrata</taxon>
        <taxon>Euteleostomi</taxon>
        <taxon>Lepidosauria</taxon>
        <taxon>Squamata</taxon>
        <taxon>Bifurcata</taxon>
        <taxon>Unidentata</taxon>
        <taxon>Episquamata</taxon>
        <taxon>Toxicofera</taxon>
        <taxon>Serpentes</taxon>
        <taxon>Colubroidea</taxon>
        <taxon>Elapidae</taxon>
        <taxon>Elapinae</taxon>
        <taxon>Naja</taxon>
    </lineage>
</organism>
<sequence>LTCLICPEKYCNKVHTCLNGEKICFKRYSERKLLGKRYIRGCADTCPVRKPREIVQCCSTDKCNH</sequence>
<keyword id="KW-0008">Acetylcholine receptor inhibiting toxin</keyword>
<keyword id="KW-0903">Direct protein sequencing</keyword>
<keyword id="KW-1015">Disulfide bond</keyword>
<keyword id="KW-0872">Ion channel impairing toxin</keyword>
<keyword id="KW-0528">Neurotoxin</keyword>
<keyword id="KW-0629">Postsynaptic neurotoxin</keyword>
<keyword id="KW-1185">Reference proteome</keyword>
<keyword id="KW-0964">Secreted</keyword>
<keyword id="KW-0800">Toxin</keyword>
<name>3NO26_NAJNA</name>
<proteinExistence type="evidence at protein level"/>
<protein>
    <recommendedName>
        <fullName evidence="5">Weak neurotoxin 6</fullName>
    </recommendedName>
</protein>
<evidence type="ECO:0000250" key="1">
    <source>
        <dbReference type="UniProtKB" id="O42255"/>
    </source>
</evidence>
<evidence type="ECO:0000250" key="2">
    <source>
        <dbReference type="UniProtKB" id="Q8AY51"/>
    </source>
</evidence>
<evidence type="ECO:0000269" key="3">
    <source>
    </source>
</evidence>
<evidence type="ECO:0000305" key="4"/>
<evidence type="ECO:0000305" key="5">
    <source>
    </source>
</evidence>
<dbReference type="PIR" id="S16019">
    <property type="entry name" value="S16019"/>
</dbReference>
<dbReference type="SMR" id="P29180"/>
<dbReference type="Proteomes" id="UP000694559">
    <property type="component" value="Unplaced"/>
</dbReference>
<dbReference type="GO" id="GO:0005576">
    <property type="term" value="C:extracellular region"/>
    <property type="evidence" value="ECO:0007669"/>
    <property type="project" value="UniProtKB-SubCell"/>
</dbReference>
<dbReference type="GO" id="GO:0030550">
    <property type="term" value="F:acetylcholine receptor inhibitor activity"/>
    <property type="evidence" value="ECO:0007669"/>
    <property type="project" value="UniProtKB-KW"/>
</dbReference>
<dbReference type="GO" id="GO:0099106">
    <property type="term" value="F:ion channel regulator activity"/>
    <property type="evidence" value="ECO:0007669"/>
    <property type="project" value="UniProtKB-KW"/>
</dbReference>
<dbReference type="GO" id="GO:0090729">
    <property type="term" value="F:toxin activity"/>
    <property type="evidence" value="ECO:0007669"/>
    <property type="project" value="UniProtKB-KW"/>
</dbReference>
<dbReference type="CDD" id="cd00206">
    <property type="entry name" value="TFP_snake_toxin"/>
    <property type="match status" value="1"/>
</dbReference>
<dbReference type="FunFam" id="2.10.60.10:FF:000024">
    <property type="entry name" value="Cytotoxin 1"/>
    <property type="match status" value="1"/>
</dbReference>
<dbReference type="Gene3D" id="2.10.60.10">
    <property type="entry name" value="CD59"/>
    <property type="match status" value="1"/>
</dbReference>
<dbReference type="InterPro" id="IPR003571">
    <property type="entry name" value="Snake_3FTx"/>
</dbReference>
<dbReference type="InterPro" id="IPR045860">
    <property type="entry name" value="Snake_toxin-like_sf"/>
</dbReference>
<dbReference type="InterPro" id="IPR018354">
    <property type="entry name" value="Snake_toxin_con_site"/>
</dbReference>
<dbReference type="InterPro" id="IPR054131">
    <property type="entry name" value="Toxin_cobra-type"/>
</dbReference>
<dbReference type="Pfam" id="PF21947">
    <property type="entry name" value="Toxin_cobra-type"/>
    <property type="match status" value="1"/>
</dbReference>
<dbReference type="SUPFAM" id="SSF57302">
    <property type="entry name" value="Snake toxin-like"/>
    <property type="match status" value="1"/>
</dbReference>
<dbReference type="PROSITE" id="PS00272">
    <property type="entry name" value="SNAKE_TOXIN"/>
    <property type="match status" value="1"/>
</dbReference>
<accession>P29180</accession>
<comment type="function">
    <text evidence="1">Binds with low affinity to muscular (alpha-1-beta-1-delta-epsilon/CHRNA1-CHRNB1-CHRND-CHRNE) and very low affinity to neuronal (alpha-7/CHRNA7) nicotinic acetylcholine receptor (nAChR).</text>
</comment>
<comment type="subcellular location">
    <subcellularLocation>
        <location evidence="3">Secreted</location>
    </subcellularLocation>
</comment>
<comment type="tissue specificity">
    <text evidence="5">Expressed by the venom gland.</text>
</comment>
<comment type="similarity">
    <text evidence="4">Belongs to the three-finger toxin family. Ancestral subfamily. Orphan group II sub-subfamily.</text>
</comment>
<reference key="1">
    <citation type="journal article" date="1991" name="FEBS Lett.">
        <title>Extensive multiplicity of the miscellaneous type of neurotoxins from the venom of the cobra Naja naja naja and structural characterization of major components.</title>
        <authorList>
            <person name="Shafqat J."/>
            <person name="Siddiqi A.R."/>
            <person name="Zaidi Z.H."/>
            <person name="Joernvall H."/>
        </authorList>
    </citation>
    <scope>PROTEIN SEQUENCE</scope>
    <scope>SUBCELLULAR LOCATION</scope>
    <source>
        <tissue>Venom</tissue>
    </source>
</reference>
<feature type="chain" id="PRO_0000093638" description="Weak neurotoxin 6" evidence="3">
    <location>
        <begin position="1"/>
        <end position="65"/>
    </location>
</feature>
<feature type="disulfide bond" evidence="2">
    <location>
        <begin position="3"/>
        <end position="24"/>
    </location>
</feature>
<feature type="disulfide bond" evidence="2">
    <location>
        <begin position="6"/>
        <end position="11"/>
    </location>
</feature>
<feature type="disulfide bond" evidence="2">
    <location>
        <begin position="17"/>
        <end position="42"/>
    </location>
</feature>
<feature type="disulfide bond" evidence="2">
    <location>
        <begin position="46"/>
        <end position="57"/>
    </location>
</feature>
<feature type="disulfide bond" evidence="2">
    <location>
        <begin position="58"/>
        <end position="63"/>
    </location>
</feature>